<keyword id="KW-0963">Cytoplasm</keyword>
<keyword id="KW-0903">Direct protein sequencing</keyword>
<keyword id="KW-0520">NAD</keyword>
<keyword id="KW-0560">Oxidoreductase</keyword>
<keyword id="KW-1185">Reference proteome</keyword>
<keyword id="KW-0346">Stress response</keyword>
<comment type="catalytic activity">
    <reaction>
        <text>(2S,3S)-2,3-dihydroxy-2,3-dihydrobenzoate + NAD(+) = 2,3-dihydroxybenzoate + NADH + H(+)</text>
        <dbReference type="Rhea" id="RHEA:23824"/>
        <dbReference type="ChEBI" id="CHEBI:15378"/>
        <dbReference type="ChEBI" id="CHEBI:36654"/>
        <dbReference type="ChEBI" id="CHEBI:57540"/>
        <dbReference type="ChEBI" id="CHEBI:57945"/>
        <dbReference type="ChEBI" id="CHEBI:58764"/>
        <dbReference type="EC" id="1.3.1.28"/>
    </reaction>
</comment>
<comment type="pathway">
    <text>Siderophore biosynthesis; bacillibactin biosynthesis.</text>
</comment>
<comment type="subcellular location">
    <subcellularLocation>
        <location>Cytoplasm</location>
    </subcellularLocation>
</comment>
<comment type="induction">
    <text>In response to low temperature.</text>
</comment>
<comment type="similarity">
    <text evidence="3">Belongs to the short-chain dehydrogenases/reductases (SDR) family.</text>
</comment>
<proteinExistence type="evidence at protein level"/>
<reference key="1">
    <citation type="journal article" date="1996" name="Gene">
        <title>Sequence and genetic organization of a Bacillus subtilis operon encoding 2,3-dihydroxybenzoate biosynthetic enzymes.</title>
        <authorList>
            <person name="Rowland B.M."/>
            <person name="Grossman T.H."/>
            <person name="Osburne M.S."/>
            <person name="Taber H.W."/>
        </authorList>
    </citation>
    <scope>NUCLEOTIDE SEQUENCE [GENOMIC DNA]</scope>
    <source>
        <strain>168 / Marburg / ATCC 6051 / DSM 10 / JCM 1465 / NBRC 13719 / NCIMB 3610 / NRRL NRS-744 / VKM B-501</strain>
    </source>
</reference>
<reference key="2">
    <citation type="journal article" date="1997" name="Nature">
        <title>The complete genome sequence of the Gram-positive bacterium Bacillus subtilis.</title>
        <authorList>
            <person name="Kunst F."/>
            <person name="Ogasawara N."/>
            <person name="Moszer I."/>
            <person name="Albertini A.M."/>
            <person name="Alloni G."/>
            <person name="Azevedo V."/>
            <person name="Bertero M.G."/>
            <person name="Bessieres P."/>
            <person name="Bolotin A."/>
            <person name="Borchert S."/>
            <person name="Borriss R."/>
            <person name="Boursier L."/>
            <person name="Brans A."/>
            <person name="Braun M."/>
            <person name="Brignell S.C."/>
            <person name="Bron S."/>
            <person name="Brouillet S."/>
            <person name="Bruschi C.V."/>
            <person name="Caldwell B."/>
            <person name="Capuano V."/>
            <person name="Carter N.M."/>
            <person name="Choi S.-K."/>
            <person name="Codani J.-J."/>
            <person name="Connerton I.F."/>
            <person name="Cummings N.J."/>
            <person name="Daniel R.A."/>
            <person name="Denizot F."/>
            <person name="Devine K.M."/>
            <person name="Duesterhoeft A."/>
            <person name="Ehrlich S.D."/>
            <person name="Emmerson P.T."/>
            <person name="Entian K.-D."/>
            <person name="Errington J."/>
            <person name="Fabret C."/>
            <person name="Ferrari E."/>
            <person name="Foulger D."/>
            <person name="Fritz C."/>
            <person name="Fujita M."/>
            <person name="Fujita Y."/>
            <person name="Fuma S."/>
            <person name="Galizzi A."/>
            <person name="Galleron N."/>
            <person name="Ghim S.-Y."/>
            <person name="Glaser P."/>
            <person name="Goffeau A."/>
            <person name="Golightly E.J."/>
            <person name="Grandi G."/>
            <person name="Guiseppi G."/>
            <person name="Guy B.J."/>
            <person name="Haga K."/>
            <person name="Haiech J."/>
            <person name="Harwood C.R."/>
            <person name="Henaut A."/>
            <person name="Hilbert H."/>
            <person name="Holsappel S."/>
            <person name="Hosono S."/>
            <person name="Hullo M.-F."/>
            <person name="Itaya M."/>
            <person name="Jones L.-M."/>
            <person name="Joris B."/>
            <person name="Karamata D."/>
            <person name="Kasahara Y."/>
            <person name="Klaerr-Blanchard M."/>
            <person name="Klein C."/>
            <person name="Kobayashi Y."/>
            <person name="Koetter P."/>
            <person name="Koningstein G."/>
            <person name="Krogh S."/>
            <person name="Kumano M."/>
            <person name="Kurita K."/>
            <person name="Lapidus A."/>
            <person name="Lardinois S."/>
            <person name="Lauber J."/>
            <person name="Lazarevic V."/>
            <person name="Lee S.-M."/>
            <person name="Levine A."/>
            <person name="Liu H."/>
            <person name="Masuda S."/>
            <person name="Mauel C."/>
            <person name="Medigue C."/>
            <person name="Medina N."/>
            <person name="Mellado R.P."/>
            <person name="Mizuno M."/>
            <person name="Moestl D."/>
            <person name="Nakai S."/>
            <person name="Noback M."/>
            <person name="Noone D."/>
            <person name="O'Reilly M."/>
            <person name="Ogawa K."/>
            <person name="Ogiwara A."/>
            <person name="Oudega B."/>
            <person name="Park S.-H."/>
            <person name="Parro V."/>
            <person name="Pohl T.M."/>
            <person name="Portetelle D."/>
            <person name="Porwollik S."/>
            <person name="Prescott A.M."/>
            <person name="Presecan E."/>
            <person name="Pujic P."/>
            <person name="Purnelle B."/>
            <person name="Rapoport G."/>
            <person name="Rey M."/>
            <person name="Reynolds S."/>
            <person name="Rieger M."/>
            <person name="Rivolta C."/>
            <person name="Rocha E."/>
            <person name="Roche B."/>
            <person name="Rose M."/>
            <person name="Sadaie Y."/>
            <person name="Sato T."/>
            <person name="Scanlan E."/>
            <person name="Schleich S."/>
            <person name="Schroeter R."/>
            <person name="Scoffone F."/>
            <person name="Sekiguchi J."/>
            <person name="Sekowska A."/>
            <person name="Seror S.J."/>
            <person name="Serror P."/>
            <person name="Shin B.-S."/>
            <person name="Soldo B."/>
            <person name="Sorokin A."/>
            <person name="Tacconi E."/>
            <person name="Takagi T."/>
            <person name="Takahashi H."/>
            <person name="Takemaru K."/>
            <person name="Takeuchi M."/>
            <person name="Tamakoshi A."/>
            <person name="Tanaka T."/>
            <person name="Terpstra P."/>
            <person name="Tognoni A."/>
            <person name="Tosato V."/>
            <person name="Uchiyama S."/>
            <person name="Vandenbol M."/>
            <person name="Vannier F."/>
            <person name="Vassarotti A."/>
            <person name="Viari A."/>
            <person name="Wambutt R."/>
            <person name="Wedler E."/>
            <person name="Wedler H."/>
            <person name="Weitzenegger T."/>
            <person name="Winters P."/>
            <person name="Wipat A."/>
            <person name="Yamamoto H."/>
            <person name="Yamane K."/>
            <person name="Yasumoto K."/>
            <person name="Yata K."/>
            <person name="Yoshida K."/>
            <person name="Yoshikawa H.-F."/>
            <person name="Zumstein E."/>
            <person name="Yoshikawa H."/>
            <person name="Danchin A."/>
        </authorList>
    </citation>
    <scope>NUCLEOTIDE SEQUENCE [LARGE SCALE GENOMIC DNA]</scope>
    <source>
        <strain>168</strain>
    </source>
</reference>
<reference key="3">
    <citation type="journal article" date="2009" name="Microbiology">
        <title>From a consortium sequence to a unified sequence: the Bacillus subtilis 168 reference genome a decade later.</title>
        <authorList>
            <person name="Barbe V."/>
            <person name="Cruveiller S."/>
            <person name="Kunst F."/>
            <person name="Lenoble P."/>
            <person name="Meurice G."/>
            <person name="Sekowska A."/>
            <person name="Vallenet D."/>
            <person name="Wang T."/>
            <person name="Moszer I."/>
            <person name="Medigue C."/>
            <person name="Danchin A."/>
        </authorList>
    </citation>
    <scope>SEQUENCE REVISION TO 56 AND 146</scope>
</reference>
<reference key="4">
    <citation type="journal article" date="1993" name="Gene">
        <title>Cloning and mapping of the Bacillus subtilis locus homologous to Escherichia coli ent genes.</title>
        <authorList>
            <person name="Adams R."/>
            <person name="Schumann W."/>
        </authorList>
    </citation>
    <scope>NUCLEOTIDE SEQUENCE [GENOMIC DNA] OF 59-256</scope>
    <source>
        <strain>168</strain>
    </source>
</reference>
<reference key="5">
    <citation type="submission" date="1997-10" db="UniProtKB">
        <authorList>
            <person name="Graumann P.L."/>
            <person name="Schmid R."/>
            <person name="Marahiel M.A."/>
        </authorList>
    </citation>
    <scope>PROTEIN SEQUENCE OF 1-11</scope>
    <source>
        <strain>168 / JH642</strain>
    </source>
</reference>
<accession>P39071</accession>
<feature type="chain" id="PRO_0000054601" description="2,3-dihydro-2,3-dihydroxybenzoate dehydrogenase">
    <location>
        <begin position="1"/>
        <end position="261"/>
    </location>
</feature>
<feature type="active site" description="Proton acceptor" evidence="2">
    <location>
        <position position="157"/>
    </location>
</feature>
<feature type="binding site" evidence="1">
    <location>
        <begin position="12"/>
        <end position="36"/>
    </location>
    <ligand>
        <name>NAD(+)</name>
        <dbReference type="ChEBI" id="CHEBI:57540"/>
    </ligand>
</feature>
<feature type="binding site" evidence="1">
    <location>
        <position position="144"/>
    </location>
    <ligand>
        <name>substrate</name>
    </ligand>
</feature>
<feature type="sequence conflict" description="In Ref. 1; AAC44630." evidence="3" ref="1">
    <original>G</original>
    <variation>A</variation>
    <location>
        <position position="56"/>
    </location>
</feature>
<feature type="sequence conflict" description="In Ref. 4; AAA16899." evidence="3" ref="4">
    <original>A</original>
    <variation>D</variation>
    <location>
        <position position="146"/>
    </location>
</feature>
<feature type="sequence conflict" description="In Ref. 1; AAC44630." evidence="3" ref="1">
    <original>A</original>
    <variation>P</variation>
    <location>
        <position position="146"/>
    </location>
</feature>
<feature type="sequence conflict" description="In Ref. 4; AAA16899." evidence="3" ref="4">
    <original>IADA</original>
    <variation>MRC</variation>
    <location>
        <begin position="231"/>
        <end position="234"/>
    </location>
</feature>
<feature type="sequence conflict" description="In Ref. 4; AAA16899." evidence="3" ref="4">
    <original>TMHNLCVDGG</original>
    <variation>RCIFMRRC</variation>
    <location>
        <begin position="247"/>
        <end position="256"/>
    </location>
</feature>
<gene>
    <name type="primary">dhbA</name>
    <name type="synonym">entA</name>
    <name type="ordered locus">BSU32000</name>
</gene>
<evidence type="ECO:0000250" key="1"/>
<evidence type="ECO:0000255" key="2">
    <source>
        <dbReference type="PROSITE-ProRule" id="PRU10001"/>
    </source>
</evidence>
<evidence type="ECO:0000305" key="3"/>
<organism>
    <name type="scientific">Bacillus subtilis (strain 168)</name>
    <dbReference type="NCBI Taxonomy" id="224308"/>
    <lineage>
        <taxon>Bacteria</taxon>
        <taxon>Bacillati</taxon>
        <taxon>Bacillota</taxon>
        <taxon>Bacilli</taxon>
        <taxon>Bacillales</taxon>
        <taxon>Bacillaceae</taxon>
        <taxon>Bacillus</taxon>
    </lineage>
</organism>
<dbReference type="EC" id="1.3.1.28"/>
<dbReference type="EMBL" id="U26444">
    <property type="protein sequence ID" value="AAC44630.1"/>
    <property type="molecule type" value="Genomic_DNA"/>
</dbReference>
<dbReference type="EMBL" id="AL009126">
    <property type="protein sequence ID" value="CAB15190.2"/>
    <property type="molecule type" value="Genomic_DNA"/>
</dbReference>
<dbReference type="EMBL" id="L08644">
    <property type="protein sequence ID" value="AAA16899.2"/>
    <property type="molecule type" value="Genomic_DNA"/>
</dbReference>
<dbReference type="PIR" id="A69615">
    <property type="entry name" value="A69615"/>
</dbReference>
<dbReference type="RefSeq" id="NP_391080.2">
    <property type="nucleotide sequence ID" value="NC_000964.3"/>
</dbReference>
<dbReference type="RefSeq" id="WP_003244476.1">
    <property type="nucleotide sequence ID" value="NZ_OZ025638.1"/>
</dbReference>
<dbReference type="SMR" id="P39071"/>
<dbReference type="FunCoup" id="P39071">
    <property type="interactions" value="28"/>
</dbReference>
<dbReference type="IntAct" id="P39071">
    <property type="interactions" value="1"/>
</dbReference>
<dbReference type="MINT" id="P39071"/>
<dbReference type="STRING" id="224308.BSU32000"/>
<dbReference type="jPOST" id="P39071"/>
<dbReference type="PaxDb" id="224308-BSU32000"/>
<dbReference type="EnsemblBacteria" id="CAB15190">
    <property type="protein sequence ID" value="CAB15190"/>
    <property type="gene ID" value="BSU_32000"/>
</dbReference>
<dbReference type="GeneID" id="936579"/>
<dbReference type="KEGG" id="bsu:BSU32000"/>
<dbReference type="PATRIC" id="fig|224308.179.peg.3466"/>
<dbReference type="eggNOG" id="COG1028">
    <property type="taxonomic scope" value="Bacteria"/>
</dbReference>
<dbReference type="InParanoid" id="P39071"/>
<dbReference type="OrthoDB" id="9803333at2"/>
<dbReference type="PhylomeDB" id="P39071"/>
<dbReference type="BioCyc" id="BSUB:BSU32000-MONOMER"/>
<dbReference type="BioCyc" id="MetaCyc:MONOMER-13913"/>
<dbReference type="UniPathway" id="UPA00013"/>
<dbReference type="Proteomes" id="UP000001570">
    <property type="component" value="Chromosome"/>
</dbReference>
<dbReference type="GO" id="GO:0005737">
    <property type="term" value="C:cytoplasm"/>
    <property type="evidence" value="ECO:0007669"/>
    <property type="project" value="UniProtKB-SubCell"/>
</dbReference>
<dbReference type="GO" id="GO:0008667">
    <property type="term" value="F:2,3-dihydro-2,3-dihydroxybenzoate dehydrogenase activity"/>
    <property type="evidence" value="ECO:0007669"/>
    <property type="project" value="UniProtKB-EC"/>
</dbReference>
<dbReference type="GO" id="GO:0016616">
    <property type="term" value="F:oxidoreductase activity, acting on the CH-OH group of donors, NAD or NADP as acceptor"/>
    <property type="evidence" value="ECO:0000318"/>
    <property type="project" value="GO_Central"/>
</dbReference>
<dbReference type="GO" id="GO:0071281">
    <property type="term" value="P:cellular response to iron ion"/>
    <property type="evidence" value="ECO:0000314"/>
    <property type="project" value="CollecTF"/>
</dbReference>
<dbReference type="GO" id="GO:0019290">
    <property type="term" value="P:siderophore biosynthetic process"/>
    <property type="evidence" value="ECO:0007669"/>
    <property type="project" value="InterPro"/>
</dbReference>
<dbReference type="CDD" id="cd05331">
    <property type="entry name" value="DH-DHB-DH_SDR_c"/>
    <property type="match status" value="1"/>
</dbReference>
<dbReference type="FunFam" id="3.40.50.720:FF:000160">
    <property type="entry name" value="2,3-dihydro-2,3-dihydroxybenzoate dehydrogenase"/>
    <property type="match status" value="1"/>
</dbReference>
<dbReference type="Gene3D" id="3.40.50.720">
    <property type="entry name" value="NAD(P)-binding Rossmann-like Domain"/>
    <property type="match status" value="1"/>
</dbReference>
<dbReference type="InterPro" id="IPR003560">
    <property type="entry name" value="DHB_DH"/>
</dbReference>
<dbReference type="InterPro" id="IPR036291">
    <property type="entry name" value="NAD(P)-bd_dom_sf"/>
</dbReference>
<dbReference type="InterPro" id="IPR020904">
    <property type="entry name" value="Sc_DH/Rdtase_CS"/>
</dbReference>
<dbReference type="InterPro" id="IPR002347">
    <property type="entry name" value="SDR_fam"/>
</dbReference>
<dbReference type="NCBIfam" id="TIGR04316">
    <property type="entry name" value="dhbA_paeA"/>
    <property type="match status" value="1"/>
</dbReference>
<dbReference type="NCBIfam" id="NF006074">
    <property type="entry name" value="PRK08220.1"/>
    <property type="match status" value="1"/>
</dbReference>
<dbReference type="PANTHER" id="PTHR42760:SF115">
    <property type="entry name" value="3-OXOACYL-[ACYL-CARRIER-PROTEIN] REDUCTASE FABG"/>
    <property type="match status" value="1"/>
</dbReference>
<dbReference type="PANTHER" id="PTHR42760">
    <property type="entry name" value="SHORT-CHAIN DEHYDROGENASES/REDUCTASES FAMILY MEMBER"/>
    <property type="match status" value="1"/>
</dbReference>
<dbReference type="Pfam" id="PF00106">
    <property type="entry name" value="adh_short"/>
    <property type="match status" value="1"/>
</dbReference>
<dbReference type="PRINTS" id="PR01397">
    <property type="entry name" value="DHBDHDRGNASE"/>
</dbReference>
<dbReference type="PRINTS" id="PR00080">
    <property type="entry name" value="SDRFAMILY"/>
</dbReference>
<dbReference type="SUPFAM" id="SSF51735">
    <property type="entry name" value="NAD(P)-binding Rossmann-fold domains"/>
    <property type="match status" value="1"/>
</dbReference>
<dbReference type="PROSITE" id="PS00061">
    <property type="entry name" value="ADH_SHORT"/>
    <property type="match status" value="1"/>
</dbReference>
<name>DHBA_BACSU</name>
<sequence length="261" mass="27454">MNAKGIEGKIAFITGAAQGIGEAVARTLASQGAHIAAVDYNPEKLEKVVSSLKAEGRHAEAFPADVRDSAAIDEITARIEREMGPIDILVNVAGVLRPGLIHSLSDEEWEATFSVNSTGVFNASRSVSKYMMDRRSGSIVTVGSNAAGVPRTSMAAYASSKAAAVMFTKCLGLELAEYNIRCNIVSPGSTETDMQWSLWADENGAEQVIKGSLETFKTGIPLKKLAKPSDIADAVLFLVSGQAGHITMHNLCVDGGATLGV</sequence>
<protein>
    <recommendedName>
        <fullName>2,3-dihydro-2,3-dihydroxybenzoate dehydrogenase</fullName>
        <ecNumber>1.3.1.28</ecNumber>
    </recommendedName>
    <alternativeName>
        <fullName>Cold shock protein CSI14</fullName>
    </alternativeName>
</protein>